<proteinExistence type="evidence at protein level"/>
<gene>
    <name type="primary">Vkorc1</name>
</gene>
<sequence length="161" mass="17768">MGTTWRSPGLVRLALCLAGLALSLYALHVKAARARDENYRALCDVGTAISCSRVFSSRWGRGFGLVEHMLGADSVLNQSNSIFGCLFYTLQLLLGCLRGRWASILLVLSSLVSVAGSVYLAWILFFVLYDFCIVCITTYAINVGLMLLSFQKVPEHKTKKH</sequence>
<dbReference type="EC" id="1.17.4.4" evidence="2"/>
<dbReference type="EMBL" id="AK013996">
    <property type="protein sequence ID" value="BAB29106.1"/>
    <property type="molecule type" value="mRNA"/>
</dbReference>
<dbReference type="EMBL" id="AK002742">
    <property type="protein sequence ID" value="BAB22320.1"/>
    <property type="molecule type" value="mRNA"/>
</dbReference>
<dbReference type="EMBL" id="AK003237">
    <property type="protein sequence ID" value="BAB22661.1"/>
    <property type="molecule type" value="mRNA"/>
</dbReference>
<dbReference type="EMBL" id="AK008509">
    <property type="protein sequence ID" value="BAB25708.1"/>
    <property type="molecule type" value="mRNA"/>
</dbReference>
<dbReference type="EMBL" id="AK008578">
    <property type="protein sequence ID" value="BAB25757.1"/>
    <property type="molecule type" value="mRNA"/>
</dbReference>
<dbReference type="EMBL" id="BC031732">
    <property type="protein sequence ID" value="AAH31732.1"/>
    <property type="molecule type" value="mRNA"/>
</dbReference>
<dbReference type="CCDS" id="CCDS21883.1"/>
<dbReference type="RefSeq" id="NP_848715.1">
    <property type="nucleotide sequence ID" value="NM_178600.2"/>
</dbReference>
<dbReference type="SMR" id="Q9CRC0"/>
<dbReference type="BioGRID" id="205697">
    <property type="interactions" value="4"/>
</dbReference>
<dbReference type="FunCoup" id="Q9CRC0">
    <property type="interactions" value="381"/>
</dbReference>
<dbReference type="STRING" id="10090.ENSMUSP00000033074"/>
<dbReference type="GlyGen" id="Q9CRC0">
    <property type="glycosylation" value="1 site, 1 O-linked glycan (1 site)"/>
</dbReference>
<dbReference type="PhosphoSitePlus" id="Q9CRC0"/>
<dbReference type="SwissPalm" id="Q9CRC0"/>
<dbReference type="jPOST" id="Q9CRC0"/>
<dbReference type="PaxDb" id="10090-ENSMUSP00000033074"/>
<dbReference type="PeptideAtlas" id="Q9CRC0"/>
<dbReference type="ProteomicsDB" id="297605"/>
<dbReference type="Pumba" id="Q9CRC0"/>
<dbReference type="DNASU" id="27973"/>
<dbReference type="Ensembl" id="ENSMUST00000033074.8">
    <property type="protein sequence ID" value="ENSMUSP00000033074.7"/>
    <property type="gene ID" value="ENSMUSG00000096145.3"/>
</dbReference>
<dbReference type="GeneID" id="27973"/>
<dbReference type="KEGG" id="mmu:27973"/>
<dbReference type="UCSC" id="uc009jxe.1">
    <property type="organism name" value="mouse"/>
</dbReference>
<dbReference type="AGR" id="MGI:106442"/>
<dbReference type="CTD" id="79001"/>
<dbReference type="MGI" id="MGI:106442">
    <property type="gene designation" value="Vkorc1"/>
</dbReference>
<dbReference type="VEuPathDB" id="HostDB:ENSMUSG00000096145"/>
<dbReference type="eggNOG" id="ENOG502S4E7">
    <property type="taxonomic scope" value="Eukaryota"/>
</dbReference>
<dbReference type="GeneTree" id="ENSGT00940000157421"/>
<dbReference type="HOGENOM" id="CLU_105471_0_0_1"/>
<dbReference type="InParanoid" id="Q9CRC0"/>
<dbReference type="OMA" id="CDFNEHM"/>
<dbReference type="OrthoDB" id="17010at2759"/>
<dbReference type="PhylomeDB" id="Q9CRC0"/>
<dbReference type="TreeFam" id="TF328467"/>
<dbReference type="BRENDA" id="1.17.4.4">
    <property type="organism ID" value="3474"/>
</dbReference>
<dbReference type="Reactome" id="R-MMU-6806664">
    <property type="pathway name" value="Metabolism of vitamin K"/>
</dbReference>
<dbReference type="BioGRID-ORCS" id="27973">
    <property type="hits" value="2 hits in 80 CRISPR screens"/>
</dbReference>
<dbReference type="ChiTaRS" id="Vkorc1">
    <property type="organism name" value="mouse"/>
</dbReference>
<dbReference type="PRO" id="PR:Q9CRC0"/>
<dbReference type="Proteomes" id="UP000000589">
    <property type="component" value="Chromosome 7"/>
</dbReference>
<dbReference type="RNAct" id="Q9CRC0">
    <property type="molecule type" value="protein"/>
</dbReference>
<dbReference type="Bgee" id="ENSMUSG00000096145">
    <property type="expression patterns" value="Expressed in primary oocyte and 70 other cell types or tissues"/>
</dbReference>
<dbReference type="ExpressionAtlas" id="Q9CRC0">
    <property type="expression patterns" value="baseline and differential"/>
</dbReference>
<dbReference type="GO" id="GO:0005783">
    <property type="term" value="C:endoplasmic reticulum"/>
    <property type="evidence" value="ECO:0000266"/>
    <property type="project" value="MGI"/>
</dbReference>
<dbReference type="GO" id="GO:0005788">
    <property type="term" value="C:endoplasmic reticulum lumen"/>
    <property type="evidence" value="ECO:0000314"/>
    <property type="project" value="MGI"/>
</dbReference>
<dbReference type="GO" id="GO:0005789">
    <property type="term" value="C:endoplasmic reticulum membrane"/>
    <property type="evidence" value="ECO:0007669"/>
    <property type="project" value="UniProtKB-SubCell"/>
</dbReference>
<dbReference type="GO" id="GO:0048038">
    <property type="term" value="F:quinone binding"/>
    <property type="evidence" value="ECO:0007669"/>
    <property type="project" value="UniProtKB-KW"/>
</dbReference>
<dbReference type="GO" id="GO:0047058">
    <property type="term" value="F:vitamin-K-epoxide reductase (warfarin-insensitive) activity"/>
    <property type="evidence" value="ECO:0007669"/>
    <property type="project" value="Ensembl"/>
</dbReference>
<dbReference type="GO" id="GO:0047057">
    <property type="term" value="F:vitamin-K-epoxide reductase (warfarin-sensitive) activity"/>
    <property type="evidence" value="ECO:0000314"/>
    <property type="project" value="MGI"/>
</dbReference>
<dbReference type="GO" id="GO:0007596">
    <property type="term" value="P:blood coagulation"/>
    <property type="evidence" value="ECO:0000315"/>
    <property type="project" value="UniProtKB"/>
</dbReference>
<dbReference type="GO" id="GO:0060348">
    <property type="term" value="P:bone development"/>
    <property type="evidence" value="ECO:0000315"/>
    <property type="project" value="UniProtKB"/>
</dbReference>
<dbReference type="GO" id="GO:0017187">
    <property type="term" value="P:peptidyl-glutamic acid carboxylation"/>
    <property type="evidence" value="ECO:0000250"/>
    <property type="project" value="UniProtKB"/>
</dbReference>
<dbReference type="GO" id="GO:0050820">
    <property type="term" value="P:positive regulation of coagulation"/>
    <property type="evidence" value="ECO:0000315"/>
    <property type="project" value="MGI"/>
</dbReference>
<dbReference type="GO" id="GO:0042371">
    <property type="term" value="P:vitamin K biosynthetic process"/>
    <property type="evidence" value="ECO:0000266"/>
    <property type="project" value="MGI"/>
</dbReference>
<dbReference type="GO" id="GO:0042373">
    <property type="term" value="P:vitamin K metabolic process"/>
    <property type="evidence" value="ECO:0000314"/>
    <property type="project" value="MGI"/>
</dbReference>
<dbReference type="GO" id="GO:0006805">
    <property type="term" value="P:xenobiotic metabolic process"/>
    <property type="evidence" value="ECO:0007669"/>
    <property type="project" value="Ensembl"/>
</dbReference>
<dbReference type="CDD" id="cd12917">
    <property type="entry name" value="VKOR_euk"/>
    <property type="match status" value="1"/>
</dbReference>
<dbReference type="FunFam" id="1.20.1440.130:FF:000001">
    <property type="entry name" value="Vitamin K epoxide reductase complex subunit 1-like 1"/>
    <property type="match status" value="1"/>
</dbReference>
<dbReference type="Gene3D" id="1.20.1440.130">
    <property type="entry name" value="VKOR domain"/>
    <property type="match status" value="1"/>
</dbReference>
<dbReference type="InterPro" id="IPR012932">
    <property type="entry name" value="VKOR"/>
</dbReference>
<dbReference type="InterPro" id="IPR038354">
    <property type="entry name" value="VKOR_sf"/>
</dbReference>
<dbReference type="InterPro" id="IPR042406">
    <property type="entry name" value="VKORC1/VKORC1L1"/>
</dbReference>
<dbReference type="PANTHER" id="PTHR14519:SF8">
    <property type="entry name" value="VITAMIN K EPOXIDE REDUCTASE COMPLEX SUBUNIT 1"/>
    <property type="match status" value="1"/>
</dbReference>
<dbReference type="PANTHER" id="PTHR14519">
    <property type="entry name" value="VITAMIN K EPOXIDE REDUCTASE COMPLEX, SUBUNIT 1"/>
    <property type="match status" value="1"/>
</dbReference>
<dbReference type="Pfam" id="PF07884">
    <property type="entry name" value="VKOR"/>
    <property type="match status" value="1"/>
</dbReference>
<dbReference type="SMART" id="SM00756">
    <property type="entry name" value="VKc"/>
    <property type="match status" value="1"/>
</dbReference>
<accession>Q9CRC0</accession>
<feature type="chain" id="PRO_0000191669" description="Vitamin K epoxide reductase complex subunit 1">
    <location>
        <begin position="1"/>
        <end position="161"/>
    </location>
</feature>
<feature type="topological domain" description="Cytoplasmic" evidence="1">
    <location>
        <begin position="1"/>
        <end position="9"/>
    </location>
</feature>
<feature type="transmembrane region" description="Helical" evidence="1">
    <location>
        <begin position="10"/>
        <end position="29"/>
    </location>
</feature>
<feature type="topological domain" description="Lumenal" evidence="1">
    <location>
        <begin position="30"/>
        <end position="80"/>
    </location>
</feature>
<feature type="transmembrane region" description="Helical" evidence="1">
    <location>
        <begin position="81"/>
        <end position="95"/>
    </location>
</feature>
<feature type="topological domain" description="Cytoplasmic" evidence="1">
    <location>
        <begin position="96"/>
        <end position="100"/>
    </location>
</feature>
<feature type="transmembrane region" description="Helical" evidence="1">
    <location>
        <begin position="101"/>
        <end position="128"/>
    </location>
</feature>
<feature type="topological domain" description="Lumenal" evidence="1">
    <location>
        <begin position="129"/>
        <end position="131"/>
    </location>
</feature>
<feature type="transmembrane region" description="Helical" evidence="1">
    <location>
        <begin position="132"/>
        <end position="153"/>
    </location>
</feature>
<feature type="topological domain" description="Cytoplasmic" evidence="1">
    <location>
        <begin position="154"/>
        <end position="161"/>
    </location>
</feature>
<feature type="binding site" evidence="1">
    <location>
        <position position="80"/>
    </location>
    <ligand>
        <name>(S)-warfarin</name>
        <dbReference type="ChEBI" id="CHEBI:87744"/>
    </ligand>
</feature>
<feature type="binding site" evidence="1">
    <location>
        <position position="135"/>
    </location>
    <ligand>
        <name>phylloquinone</name>
        <dbReference type="ChEBI" id="CHEBI:18067"/>
    </ligand>
</feature>
<feature type="binding site" evidence="1">
    <location>
        <position position="139"/>
    </location>
    <ligand>
        <name>(S)-warfarin</name>
        <dbReference type="ChEBI" id="CHEBI:87744"/>
    </ligand>
</feature>
<feature type="binding site" evidence="1">
    <location>
        <position position="139"/>
    </location>
    <ligand>
        <name>phylloquinone</name>
        <dbReference type="ChEBI" id="CHEBI:18067"/>
    </ligand>
</feature>
<feature type="disulfide bond" description="Redox-active" evidence="1">
    <location>
        <begin position="43"/>
        <end position="51"/>
    </location>
</feature>
<feature type="disulfide bond" description="Redox-active" evidence="1">
    <location>
        <begin position="132"/>
        <end position="135"/>
    </location>
</feature>
<feature type="sequence variant" description="Identified in warfarin-resistant animals." evidence="2">
    <original>L</original>
    <variation>S</variation>
    <location>
        <position position="128"/>
    </location>
</feature>
<feature type="sequence variant" description="Identified in warfarin-resistant animals." evidence="2">
    <original>Y</original>
    <variation>C</variation>
    <location>
        <position position="139"/>
    </location>
</feature>
<keyword id="KW-1015">Disulfide bond</keyword>
<keyword id="KW-0256">Endoplasmic reticulum</keyword>
<keyword id="KW-0472">Membrane</keyword>
<keyword id="KW-0560">Oxidoreductase</keyword>
<keyword id="KW-0874">Quinone</keyword>
<keyword id="KW-0676">Redox-active center</keyword>
<keyword id="KW-1185">Reference proteome</keyword>
<keyword id="KW-0812">Transmembrane</keyword>
<keyword id="KW-1133">Transmembrane helix</keyword>
<organism>
    <name type="scientific">Mus musculus</name>
    <name type="common">Mouse</name>
    <dbReference type="NCBI Taxonomy" id="10090"/>
    <lineage>
        <taxon>Eukaryota</taxon>
        <taxon>Metazoa</taxon>
        <taxon>Chordata</taxon>
        <taxon>Craniata</taxon>
        <taxon>Vertebrata</taxon>
        <taxon>Euteleostomi</taxon>
        <taxon>Mammalia</taxon>
        <taxon>Eutheria</taxon>
        <taxon>Euarchontoglires</taxon>
        <taxon>Glires</taxon>
        <taxon>Rodentia</taxon>
        <taxon>Myomorpha</taxon>
        <taxon>Muroidea</taxon>
        <taxon>Muridae</taxon>
        <taxon>Murinae</taxon>
        <taxon>Mus</taxon>
        <taxon>Mus</taxon>
    </lineage>
</organism>
<evidence type="ECO:0000250" key="1">
    <source>
        <dbReference type="UniProtKB" id="Q9BQB6"/>
    </source>
</evidence>
<evidence type="ECO:0000269" key="2">
    <source>
    </source>
</evidence>
<evidence type="ECO:0000269" key="3">
    <source>
    </source>
</evidence>
<evidence type="ECO:0000305" key="4"/>
<protein>
    <recommendedName>
        <fullName>Vitamin K epoxide reductase complex subunit 1</fullName>
        <ecNumber evidence="2">1.17.4.4</ecNumber>
    </recommendedName>
    <alternativeName>
        <fullName>Vitamin K1 2,3-epoxide reductase subunit 1</fullName>
    </alternativeName>
</protein>
<name>VKOR1_MOUSE</name>
<comment type="function">
    <text evidence="2 3">Involved in vitamin K metabolism. Catalytic subunit of the vitamin K epoxide reductase (VKOR) complex which reduces inactive vitamin K 2,3-epoxide to active vitamin K. Vitamin K is required for the gamma-carboxylation of various proteins, including clotting factors, and is required for normal blood coagulation, but also for normal bone development.</text>
</comment>
<comment type="catalytic activity">
    <reaction evidence="2">
        <text>phylloquinone + [protein]-disulfide + H2O = 2,3-epoxyphylloquinone + [protein]-dithiol</text>
        <dbReference type="Rhea" id="RHEA:13817"/>
        <dbReference type="Rhea" id="RHEA-COMP:10593"/>
        <dbReference type="Rhea" id="RHEA-COMP:10594"/>
        <dbReference type="ChEBI" id="CHEBI:15377"/>
        <dbReference type="ChEBI" id="CHEBI:15759"/>
        <dbReference type="ChEBI" id="CHEBI:18067"/>
        <dbReference type="ChEBI" id="CHEBI:29950"/>
        <dbReference type="ChEBI" id="CHEBI:50058"/>
        <dbReference type="EC" id="1.17.4.4"/>
    </reaction>
    <physiologicalReaction direction="right-to-left" evidence="2">
        <dbReference type="Rhea" id="RHEA:13819"/>
    </physiologicalReaction>
</comment>
<comment type="catalytic activity">
    <reaction evidence="2">
        <text>phylloquinol + [protein]-disulfide = phylloquinone + [protein]-dithiol</text>
        <dbReference type="Rhea" id="RHEA:57744"/>
        <dbReference type="Rhea" id="RHEA-COMP:10593"/>
        <dbReference type="Rhea" id="RHEA-COMP:10594"/>
        <dbReference type="ChEBI" id="CHEBI:18067"/>
        <dbReference type="ChEBI" id="CHEBI:28433"/>
        <dbReference type="ChEBI" id="CHEBI:29950"/>
        <dbReference type="ChEBI" id="CHEBI:50058"/>
        <dbReference type="EC" id="1.17.4.4"/>
    </reaction>
    <physiologicalReaction direction="right-to-left" evidence="2">
        <dbReference type="Rhea" id="RHEA:57746"/>
    </physiologicalReaction>
</comment>
<comment type="activity regulation">
    <text evidence="1 2">Inhibited by warfarin (coumadin) (PubMed:15879509). Warfarin locks VKORC1 in both redox states into the closed conformation (By similarity).</text>
</comment>
<comment type="subcellular location">
    <subcellularLocation>
        <location evidence="1">Endoplasmic reticulum membrane</location>
        <topology evidence="1">Multi-pass membrane protein</topology>
    </subcellularLocation>
</comment>
<comment type="tissue specificity">
    <text evidence="3">Detected in liver.</text>
</comment>
<comment type="domain">
    <text evidence="1">Partially oxidized VKORC1 forms a cysteine adduct with substrates, vitamin K 2,3-epoxide, inducing a closed conformation, juxtaposing all cysteines (S-S or SH) for unimpeded electron transfer. VKOR becomes fully oxidized with an open conformation that releases reaction products, vitamin K quinone, or hydroquinone. Cys-132 and Cys-135 constitute the catalytic redox-active center. Cys-43 and Cys-51 are the cysteine pair that mediates transfer of reducing equivalents during catalysis.</text>
</comment>
<comment type="disruption phenotype">
    <text evidence="3">Mice are born at the expected Mendelian rate and appear normal, but die between one and twenty days after birth, due to severe bleeding. In about 75% of the cases, subdural bleeding is observed, in addition to intracerebral and intramuscular bleeding. Daily oral administration of vitamin K to the mutant mice leads to normal survival, but the mice die within seven days after the cessation of vitamin K administration. Besides, both homozygous and heterozygous mutant mice display defects in bone development with reduced length of the calcified part of the long bones in front and hind limbs.</text>
</comment>
<comment type="similarity">
    <text evidence="4">Belongs to the VKOR family.</text>
</comment>
<reference key="1">
    <citation type="journal article" date="2005" name="Science">
        <title>The transcriptional landscape of the mammalian genome.</title>
        <authorList>
            <person name="Carninci P."/>
            <person name="Kasukawa T."/>
            <person name="Katayama S."/>
            <person name="Gough J."/>
            <person name="Frith M.C."/>
            <person name="Maeda N."/>
            <person name="Oyama R."/>
            <person name="Ravasi T."/>
            <person name="Lenhard B."/>
            <person name="Wells C."/>
            <person name="Kodzius R."/>
            <person name="Shimokawa K."/>
            <person name="Bajic V.B."/>
            <person name="Brenner S.E."/>
            <person name="Batalov S."/>
            <person name="Forrest A.R."/>
            <person name="Zavolan M."/>
            <person name="Davis M.J."/>
            <person name="Wilming L.G."/>
            <person name="Aidinis V."/>
            <person name="Allen J.E."/>
            <person name="Ambesi-Impiombato A."/>
            <person name="Apweiler R."/>
            <person name="Aturaliya R.N."/>
            <person name="Bailey T.L."/>
            <person name="Bansal M."/>
            <person name="Baxter L."/>
            <person name="Beisel K.W."/>
            <person name="Bersano T."/>
            <person name="Bono H."/>
            <person name="Chalk A.M."/>
            <person name="Chiu K.P."/>
            <person name="Choudhary V."/>
            <person name="Christoffels A."/>
            <person name="Clutterbuck D.R."/>
            <person name="Crowe M.L."/>
            <person name="Dalla E."/>
            <person name="Dalrymple B.P."/>
            <person name="de Bono B."/>
            <person name="Della Gatta G."/>
            <person name="di Bernardo D."/>
            <person name="Down T."/>
            <person name="Engstrom P."/>
            <person name="Fagiolini M."/>
            <person name="Faulkner G."/>
            <person name="Fletcher C.F."/>
            <person name="Fukushima T."/>
            <person name="Furuno M."/>
            <person name="Futaki S."/>
            <person name="Gariboldi M."/>
            <person name="Georgii-Hemming P."/>
            <person name="Gingeras T.R."/>
            <person name="Gojobori T."/>
            <person name="Green R.E."/>
            <person name="Gustincich S."/>
            <person name="Harbers M."/>
            <person name="Hayashi Y."/>
            <person name="Hensch T.K."/>
            <person name="Hirokawa N."/>
            <person name="Hill D."/>
            <person name="Huminiecki L."/>
            <person name="Iacono M."/>
            <person name="Ikeo K."/>
            <person name="Iwama A."/>
            <person name="Ishikawa T."/>
            <person name="Jakt M."/>
            <person name="Kanapin A."/>
            <person name="Katoh M."/>
            <person name="Kawasawa Y."/>
            <person name="Kelso J."/>
            <person name="Kitamura H."/>
            <person name="Kitano H."/>
            <person name="Kollias G."/>
            <person name="Krishnan S.P."/>
            <person name="Kruger A."/>
            <person name="Kummerfeld S.K."/>
            <person name="Kurochkin I.V."/>
            <person name="Lareau L.F."/>
            <person name="Lazarevic D."/>
            <person name="Lipovich L."/>
            <person name="Liu J."/>
            <person name="Liuni S."/>
            <person name="McWilliam S."/>
            <person name="Madan Babu M."/>
            <person name="Madera M."/>
            <person name="Marchionni L."/>
            <person name="Matsuda H."/>
            <person name="Matsuzawa S."/>
            <person name="Miki H."/>
            <person name="Mignone F."/>
            <person name="Miyake S."/>
            <person name="Morris K."/>
            <person name="Mottagui-Tabar S."/>
            <person name="Mulder N."/>
            <person name="Nakano N."/>
            <person name="Nakauchi H."/>
            <person name="Ng P."/>
            <person name="Nilsson R."/>
            <person name="Nishiguchi S."/>
            <person name="Nishikawa S."/>
            <person name="Nori F."/>
            <person name="Ohara O."/>
            <person name="Okazaki Y."/>
            <person name="Orlando V."/>
            <person name="Pang K.C."/>
            <person name="Pavan W.J."/>
            <person name="Pavesi G."/>
            <person name="Pesole G."/>
            <person name="Petrovsky N."/>
            <person name="Piazza S."/>
            <person name="Reed J."/>
            <person name="Reid J.F."/>
            <person name="Ring B.Z."/>
            <person name="Ringwald M."/>
            <person name="Rost B."/>
            <person name="Ruan Y."/>
            <person name="Salzberg S.L."/>
            <person name="Sandelin A."/>
            <person name="Schneider C."/>
            <person name="Schoenbach C."/>
            <person name="Sekiguchi K."/>
            <person name="Semple C.A."/>
            <person name="Seno S."/>
            <person name="Sessa L."/>
            <person name="Sheng Y."/>
            <person name="Shibata Y."/>
            <person name="Shimada H."/>
            <person name="Shimada K."/>
            <person name="Silva D."/>
            <person name="Sinclair B."/>
            <person name="Sperling S."/>
            <person name="Stupka E."/>
            <person name="Sugiura K."/>
            <person name="Sultana R."/>
            <person name="Takenaka Y."/>
            <person name="Taki K."/>
            <person name="Tammoja K."/>
            <person name="Tan S.L."/>
            <person name="Tang S."/>
            <person name="Taylor M.S."/>
            <person name="Tegner J."/>
            <person name="Teichmann S.A."/>
            <person name="Ueda H.R."/>
            <person name="van Nimwegen E."/>
            <person name="Verardo R."/>
            <person name="Wei C.L."/>
            <person name="Yagi K."/>
            <person name="Yamanishi H."/>
            <person name="Zabarovsky E."/>
            <person name="Zhu S."/>
            <person name="Zimmer A."/>
            <person name="Hide W."/>
            <person name="Bult C."/>
            <person name="Grimmond S.M."/>
            <person name="Teasdale R.D."/>
            <person name="Liu E.T."/>
            <person name="Brusic V."/>
            <person name="Quackenbush J."/>
            <person name="Wahlestedt C."/>
            <person name="Mattick J.S."/>
            <person name="Hume D.A."/>
            <person name="Kai C."/>
            <person name="Sasaki D."/>
            <person name="Tomaru Y."/>
            <person name="Fukuda S."/>
            <person name="Kanamori-Katayama M."/>
            <person name="Suzuki M."/>
            <person name="Aoki J."/>
            <person name="Arakawa T."/>
            <person name="Iida J."/>
            <person name="Imamura K."/>
            <person name="Itoh M."/>
            <person name="Kato T."/>
            <person name="Kawaji H."/>
            <person name="Kawagashira N."/>
            <person name="Kawashima T."/>
            <person name="Kojima M."/>
            <person name="Kondo S."/>
            <person name="Konno H."/>
            <person name="Nakano K."/>
            <person name="Ninomiya N."/>
            <person name="Nishio T."/>
            <person name="Okada M."/>
            <person name="Plessy C."/>
            <person name="Shibata K."/>
            <person name="Shiraki T."/>
            <person name="Suzuki S."/>
            <person name="Tagami M."/>
            <person name="Waki K."/>
            <person name="Watahiki A."/>
            <person name="Okamura-Oho Y."/>
            <person name="Suzuki H."/>
            <person name="Kawai J."/>
            <person name="Hayashizaki Y."/>
        </authorList>
    </citation>
    <scope>NUCLEOTIDE SEQUENCE [LARGE SCALE MRNA]</scope>
    <source>
        <strain>C57BL/6J</strain>
        <tissue>Head</tissue>
        <tissue>Kidney</tissue>
        <tissue>Small intestine</tissue>
    </source>
</reference>
<reference key="2">
    <citation type="journal article" date="2004" name="Genome Res.">
        <title>The status, quality, and expansion of the NIH full-length cDNA project: the Mammalian Gene Collection (MGC).</title>
        <authorList>
            <consortium name="The MGC Project Team"/>
        </authorList>
    </citation>
    <scope>NUCLEOTIDE SEQUENCE [LARGE SCALE MRNA]</scope>
    <source>
        <strain>Czech II</strain>
        <tissue>Mammary gland</tissue>
    </source>
</reference>
<reference key="3">
    <citation type="journal article" date="2009" name="Thromb. Haemost.">
        <title>VKORC1 deficiency in mice causes early postnatal lethality due to severe bleeding.</title>
        <authorList>
            <person name="Spohn G."/>
            <person name="Kleinridders A."/>
            <person name="Wunderlich F.T."/>
            <person name="Watzka M."/>
            <person name="Zaucke F."/>
            <person name="Blumbach K."/>
            <person name="Geisen C."/>
            <person name="Seifried E."/>
            <person name="Muller C."/>
            <person name="Paulsson M."/>
            <person name="Bruning J.C."/>
            <person name="Oldenburg J."/>
        </authorList>
    </citation>
    <scope>DISRUPTION PHENOTYPE</scope>
    <scope>FUNCTION</scope>
    <scope>TISSUE SPECIFICITY</scope>
</reference>
<reference key="4">
    <citation type="journal article" date="2010" name="Cell">
        <title>A tissue-specific atlas of mouse protein phosphorylation and expression.</title>
        <authorList>
            <person name="Huttlin E.L."/>
            <person name="Jedrychowski M.P."/>
            <person name="Elias J.E."/>
            <person name="Goswami T."/>
            <person name="Rad R."/>
            <person name="Beausoleil S.A."/>
            <person name="Villen J."/>
            <person name="Haas W."/>
            <person name="Sowa M.E."/>
            <person name="Gygi S.P."/>
        </authorList>
    </citation>
    <scope>IDENTIFICATION BY MASS SPECTROMETRY [LARGE SCALE ANALYSIS]</scope>
    <source>
        <tissue>Brown adipose tissue</tissue>
        <tissue>Kidney</tissue>
        <tissue>Liver</tissue>
        <tissue>Lung</tissue>
        <tissue>Pancreas</tissue>
        <tissue>Testis</tissue>
    </source>
</reference>
<reference key="5">
    <citation type="journal article" date="2005" name="Genetics">
        <title>The genetic basis of resistance to anticoagulants in rodents.</title>
        <authorList>
            <person name="Pelz H.J."/>
            <person name="Rost S."/>
            <person name="Hunerberg M."/>
            <person name="Fregin A."/>
            <person name="Heiberg A.C."/>
            <person name="Baert K."/>
            <person name="MacNicoll A.D."/>
            <person name="Prescott C.V."/>
            <person name="Walker A.S."/>
            <person name="Oldenburg J."/>
            <person name="Muller C.R."/>
        </authorList>
    </citation>
    <scope>VARIANTS SER-128 AND CYS-139</scope>
    <scope>ACTIVITY REGULATION</scope>
    <scope>FUNCTION</scope>
    <scope>CATALYTIC ACTIVITY</scope>
</reference>